<reference key="1">
    <citation type="journal article" date="2002" name="Proc. Natl. Acad. Sci. U.S.A.">
        <title>The genome sequence of the facultative intracellular pathogen Brucella melitensis.</title>
        <authorList>
            <person name="DelVecchio V.G."/>
            <person name="Kapatral V."/>
            <person name="Redkar R.J."/>
            <person name="Patra G."/>
            <person name="Mujer C."/>
            <person name="Los T."/>
            <person name="Ivanova N."/>
            <person name="Anderson I."/>
            <person name="Bhattacharyya A."/>
            <person name="Lykidis A."/>
            <person name="Reznik G."/>
            <person name="Jablonski L."/>
            <person name="Larsen N."/>
            <person name="D'Souza M."/>
            <person name="Bernal A."/>
            <person name="Mazur M."/>
            <person name="Goltsman E."/>
            <person name="Selkov E."/>
            <person name="Elzer P.H."/>
            <person name="Hagius S."/>
            <person name="O'Callaghan D."/>
            <person name="Letesson J.-J."/>
            <person name="Haselkorn R."/>
            <person name="Kyrpides N.C."/>
            <person name="Overbeek R."/>
        </authorList>
    </citation>
    <scope>NUCLEOTIDE SEQUENCE [LARGE SCALE GENOMIC DNA]</scope>
    <source>
        <strain>ATCC 23456 / CCUG 17765 / NCTC 10094 / 16M</strain>
    </source>
</reference>
<protein>
    <recommendedName>
        <fullName>Putative peptide import ATP-binding protein BMEII0863</fullName>
        <ecNumber>7.4.2.-</ecNumber>
    </recommendedName>
</protein>
<dbReference type="EC" id="7.4.2.-"/>
<dbReference type="EMBL" id="AE008918">
    <property type="protein sequence ID" value="AAL54105.1"/>
    <property type="molecule type" value="Genomic_DNA"/>
</dbReference>
<dbReference type="PIR" id="AF3617">
    <property type="entry name" value="AF3617"/>
</dbReference>
<dbReference type="RefSeq" id="WP_004681736.1">
    <property type="nucleotide sequence ID" value="NC_003318.1"/>
</dbReference>
<dbReference type="SMR" id="Q8YBN6"/>
<dbReference type="GeneID" id="29595844"/>
<dbReference type="KEGG" id="bme:BMEII0863"/>
<dbReference type="KEGG" id="bmel:DK63_2385"/>
<dbReference type="PATRIC" id="fig|224914.52.peg.2499"/>
<dbReference type="eggNOG" id="COG0444">
    <property type="taxonomic scope" value="Bacteria"/>
</dbReference>
<dbReference type="PhylomeDB" id="Q8YBN6"/>
<dbReference type="Proteomes" id="UP000000419">
    <property type="component" value="Chromosome II"/>
</dbReference>
<dbReference type="GO" id="GO:0005886">
    <property type="term" value="C:plasma membrane"/>
    <property type="evidence" value="ECO:0007669"/>
    <property type="project" value="UniProtKB-SubCell"/>
</dbReference>
<dbReference type="GO" id="GO:0005524">
    <property type="term" value="F:ATP binding"/>
    <property type="evidence" value="ECO:0007669"/>
    <property type="project" value="UniProtKB-KW"/>
</dbReference>
<dbReference type="GO" id="GO:0016887">
    <property type="term" value="F:ATP hydrolysis activity"/>
    <property type="evidence" value="ECO:0007669"/>
    <property type="project" value="InterPro"/>
</dbReference>
<dbReference type="GO" id="GO:0015833">
    <property type="term" value="P:peptide transport"/>
    <property type="evidence" value="ECO:0007669"/>
    <property type="project" value="UniProtKB-KW"/>
</dbReference>
<dbReference type="GO" id="GO:0015031">
    <property type="term" value="P:protein transport"/>
    <property type="evidence" value="ECO:0007669"/>
    <property type="project" value="UniProtKB-KW"/>
</dbReference>
<dbReference type="CDD" id="cd03257">
    <property type="entry name" value="ABC_NikE_OppD_transporters"/>
    <property type="match status" value="1"/>
</dbReference>
<dbReference type="FunFam" id="3.40.50.300:FF:000016">
    <property type="entry name" value="Oligopeptide ABC transporter ATP-binding component"/>
    <property type="match status" value="1"/>
</dbReference>
<dbReference type="Gene3D" id="3.40.50.300">
    <property type="entry name" value="P-loop containing nucleotide triphosphate hydrolases"/>
    <property type="match status" value="1"/>
</dbReference>
<dbReference type="InterPro" id="IPR003593">
    <property type="entry name" value="AAA+_ATPase"/>
</dbReference>
<dbReference type="InterPro" id="IPR050388">
    <property type="entry name" value="ABC_Ni/Peptide_Import"/>
</dbReference>
<dbReference type="InterPro" id="IPR003439">
    <property type="entry name" value="ABC_transporter-like_ATP-bd"/>
</dbReference>
<dbReference type="InterPro" id="IPR017871">
    <property type="entry name" value="ABC_transporter-like_CS"/>
</dbReference>
<dbReference type="InterPro" id="IPR013563">
    <property type="entry name" value="Oligopep_ABC_C"/>
</dbReference>
<dbReference type="InterPro" id="IPR027417">
    <property type="entry name" value="P-loop_NTPase"/>
</dbReference>
<dbReference type="NCBIfam" id="TIGR01727">
    <property type="entry name" value="oligo_HPY"/>
    <property type="match status" value="1"/>
</dbReference>
<dbReference type="PANTHER" id="PTHR43297:SF14">
    <property type="entry name" value="ATPASE AAA-TYPE CORE DOMAIN-CONTAINING PROTEIN"/>
    <property type="match status" value="1"/>
</dbReference>
<dbReference type="PANTHER" id="PTHR43297">
    <property type="entry name" value="OLIGOPEPTIDE TRANSPORT ATP-BINDING PROTEIN APPD"/>
    <property type="match status" value="1"/>
</dbReference>
<dbReference type="Pfam" id="PF00005">
    <property type="entry name" value="ABC_tran"/>
    <property type="match status" value="1"/>
</dbReference>
<dbReference type="Pfam" id="PF08352">
    <property type="entry name" value="oligo_HPY"/>
    <property type="match status" value="1"/>
</dbReference>
<dbReference type="SMART" id="SM00382">
    <property type="entry name" value="AAA"/>
    <property type="match status" value="1"/>
</dbReference>
<dbReference type="SUPFAM" id="SSF52540">
    <property type="entry name" value="P-loop containing nucleoside triphosphate hydrolases"/>
    <property type="match status" value="1"/>
</dbReference>
<dbReference type="PROSITE" id="PS00211">
    <property type="entry name" value="ABC_TRANSPORTER_1"/>
    <property type="match status" value="1"/>
</dbReference>
<dbReference type="PROSITE" id="PS50893">
    <property type="entry name" value="ABC_TRANSPORTER_2"/>
    <property type="match status" value="1"/>
</dbReference>
<sequence>MSRQPILDIKGLRTVFRTRAREIVAVNDVDIVVNPGETVALVGESGSGKSVTSLSIMRLLARKVGFIDAGSIILRGKSGQTVDLAAIDEEAMRRIRGNDIGMVFQEPMTSLNPVYTIGDQIGEPLRVHRGTSRREALEAAVELLDRVGIPDARRRAGQYPHELSGGMRQRATIAMALICNPTLLIADEPTTALDVTIQAQILDLMQKLQSESGMGMLFVTHNLGVVAEIAQRVVVMYAGRIVESGPVKEVFRNPRHPYTMGLLRSMPRLGDATEMKRRGEKLNTIPGMVPGLANLPSGCAFAPRCSFAVEACHAAVPPLASVNKHHGSRCIRWQEIAA</sequence>
<comment type="function">
    <text evidence="1">Probably part of an ABC transporter complex that could be involved in peptide import. Probably responsible for energy coupling to the transport system (By similarity).</text>
</comment>
<comment type="subunit">
    <text evidence="3">The complex is composed of two ATP-binding proteins (BMEII0863 and BMEII0864), two transmembrane proteins (BMEII0860 and BMEII0861) and a solute-binding protein (BMEII0859).</text>
</comment>
<comment type="subcellular location">
    <subcellularLocation>
        <location evidence="3">Cell inner membrane</location>
        <topology evidence="3">Peripheral membrane protein</topology>
    </subcellularLocation>
</comment>
<comment type="similarity">
    <text evidence="3">Belongs to the ABC transporter superfamily.</text>
</comment>
<evidence type="ECO:0000250" key="1"/>
<evidence type="ECO:0000255" key="2">
    <source>
        <dbReference type="PROSITE-ProRule" id="PRU00434"/>
    </source>
</evidence>
<evidence type="ECO:0000305" key="3"/>
<organism>
    <name type="scientific">Brucella melitensis biotype 1 (strain ATCC 23456 / CCUG 17765 / NCTC 10094 / 16M)</name>
    <dbReference type="NCBI Taxonomy" id="224914"/>
    <lineage>
        <taxon>Bacteria</taxon>
        <taxon>Pseudomonadati</taxon>
        <taxon>Pseudomonadota</taxon>
        <taxon>Alphaproteobacteria</taxon>
        <taxon>Hyphomicrobiales</taxon>
        <taxon>Brucellaceae</taxon>
        <taxon>Brucella/Ochrobactrum group</taxon>
        <taxon>Brucella</taxon>
    </lineage>
</organism>
<feature type="chain" id="PRO_0000328697" description="Putative peptide import ATP-binding protein BMEII0863">
    <location>
        <begin position="1"/>
        <end position="338"/>
    </location>
</feature>
<feature type="domain" description="ABC transporter" evidence="2">
    <location>
        <begin position="10"/>
        <end position="263"/>
    </location>
</feature>
<feature type="binding site" evidence="2">
    <location>
        <begin position="43"/>
        <end position="50"/>
    </location>
    <ligand>
        <name>ATP</name>
        <dbReference type="ChEBI" id="CHEBI:30616"/>
    </ligand>
</feature>
<accession>Q8YBN6</accession>
<name>Y3863_BRUME</name>
<gene>
    <name type="ordered locus">BMEII0863</name>
</gene>
<proteinExistence type="inferred from homology"/>
<keyword id="KW-0067">ATP-binding</keyword>
<keyword id="KW-0997">Cell inner membrane</keyword>
<keyword id="KW-1003">Cell membrane</keyword>
<keyword id="KW-0472">Membrane</keyword>
<keyword id="KW-0547">Nucleotide-binding</keyword>
<keyword id="KW-0571">Peptide transport</keyword>
<keyword id="KW-0653">Protein transport</keyword>
<keyword id="KW-1278">Translocase</keyword>
<keyword id="KW-0813">Transport</keyword>